<sequence>MTPWSLPQFAFHLVTFLSIAFIASIFVLPFLTFSFVLSSATVGLSFASRTSFEIGLFFYDRFVILLQGQLRGMIDQLPSNQPAKEEKKVKAQQQGDELFTQQEQAAPSQTLGSTIPLQSIEESLLDST</sequence>
<gene>
    <name type="primary">OSW5</name>
    <name type="ordered locus">KLLA0F07337g</name>
</gene>
<organism>
    <name type="scientific">Kluyveromyces lactis (strain ATCC 8585 / CBS 2359 / DSM 70799 / NBRC 1267 / NRRL Y-1140 / WM37)</name>
    <name type="common">Yeast</name>
    <name type="synonym">Candida sphaerica</name>
    <dbReference type="NCBI Taxonomy" id="284590"/>
    <lineage>
        <taxon>Eukaryota</taxon>
        <taxon>Fungi</taxon>
        <taxon>Dikarya</taxon>
        <taxon>Ascomycota</taxon>
        <taxon>Saccharomycotina</taxon>
        <taxon>Saccharomycetes</taxon>
        <taxon>Saccharomycetales</taxon>
        <taxon>Saccharomycetaceae</taxon>
        <taxon>Kluyveromyces</taxon>
    </lineage>
</organism>
<dbReference type="EMBL" id="CR382126">
    <property type="protein sequence ID" value="CAG98121.1"/>
    <property type="molecule type" value="Genomic_DNA"/>
</dbReference>
<dbReference type="RefSeq" id="XP_455413.1">
    <property type="nucleotide sequence ID" value="XM_455413.1"/>
</dbReference>
<dbReference type="PaxDb" id="284590-Q6CKX6"/>
<dbReference type="KEGG" id="kla:KLLA0_F07337g"/>
<dbReference type="HOGENOM" id="CLU_1959902_0_0_1"/>
<dbReference type="InParanoid" id="Q6CKX6"/>
<dbReference type="Proteomes" id="UP000000598">
    <property type="component" value="Chromosome F"/>
</dbReference>
<dbReference type="GO" id="GO:0016020">
    <property type="term" value="C:membrane"/>
    <property type="evidence" value="ECO:0007669"/>
    <property type="project" value="UniProtKB-SubCell"/>
</dbReference>
<dbReference type="GO" id="GO:0030435">
    <property type="term" value="P:sporulation resulting in formation of a cellular spore"/>
    <property type="evidence" value="ECO:0007669"/>
    <property type="project" value="UniProtKB-KW"/>
</dbReference>
<dbReference type="InterPro" id="IPR031430">
    <property type="entry name" value="Osw5"/>
</dbReference>
<dbReference type="Pfam" id="PF17062">
    <property type="entry name" value="Osw5"/>
    <property type="match status" value="1"/>
</dbReference>
<protein>
    <recommendedName>
        <fullName>Outer spore wall protein 5</fullName>
    </recommendedName>
</protein>
<accession>Q6CKX6</accession>
<proteinExistence type="inferred from homology"/>
<feature type="chain" id="PRO_0000405523" description="Outer spore wall protein 5">
    <location>
        <begin position="1"/>
        <end position="128"/>
    </location>
</feature>
<feature type="topological domain" description="Cytoplasmic" evidence="2">
    <location>
        <begin position="1"/>
        <end position="8"/>
    </location>
</feature>
<feature type="transmembrane region" description="Helical" evidence="2">
    <location>
        <begin position="9"/>
        <end position="28"/>
    </location>
</feature>
<feature type="topological domain" description="Extracellular" evidence="2">
    <location>
        <begin position="29"/>
        <end position="34"/>
    </location>
</feature>
<feature type="transmembrane region" description="Helical" evidence="2">
    <location>
        <begin position="35"/>
        <end position="59"/>
    </location>
</feature>
<feature type="topological domain" description="Cytoplasmic" evidence="2">
    <location>
        <begin position="60"/>
        <end position="128"/>
    </location>
</feature>
<evidence type="ECO:0000250" key="1"/>
<evidence type="ECO:0000255" key="2"/>
<evidence type="ECO:0000305" key="3"/>
<name>OSW5_KLULA</name>
<reference key="1">
    <citation type="journal article" date="2004" name="Nature">
        <title>Genome evolution in yeasts.</title>
        <authorList>
            <person name="Dujon B."/>
            <person name="Sherman D."/>
            <person name="Fischer G."/>
            <person name="Durrens P."/>
            <person name="Casaregola S."/>
            <person name="Lafontaine I."/>
            <person name="de Montigny J."/>
            <person name="Marck C."/>
            <person name="Neuveglise C."/>
            <person name="Talla E."/>
            <person name="Goffard N."/>
            <person name="Frangeul L."/>
            <person name="Aigle M."/>
            <person name="Anthouard V."/>
            <person name="Babour A."/>
            <person name="Barbe V."/>
            <person name="Barnay S."/>
            <person name="Blanchin S."/>
            <person name="Beckerich J.-M."/>
            <person name="Beyne E."/>
            <person name="Bleykasten C."/>
            <person name="Boisrame A."/>
            <person name="Boyer J."/>
            <person name="Cattolico L."/>
            <person name="Confanioleri F."/>
            <person name="de Daruvar A."/>
            <person name="Despons L."/>
            <person name="Fabre E."/>
            <person name="Fairhead C."/>
            <person name="Ferry-Dumazet H."/>
            <person name="Groppi A."/>
            <person name="Hantraye F."/>
            <person name="Hennequin C."/>
            <person name="Jauniaux N."/>
            <person name="Joyet P."/>
            <person name="Kachouri R."/>
            <person name="Kerrest A."/>
            <person name="Koszul R."/>
            <person name="Lemaire M."/>
            <person name="Lesur I."/>
            <person name="Ma L."/>
            <person name="Muller H."/>
            <person name="Nicaud J.-M."/>
            <person name="Nikolski M."/>
            <person name="Oztas S."/>
            <person name="Ozier-Kalogeropoulos O."/>
            <person name="Pellenz S."/>
            <person name="Potier S."/>
            <person name="Richard G.-F."/>
            <person name="Straub M.-L."/>
            <person name="Suleau A."/>
            <person name="Swennen D."/>
            <person name="Tekaia F."/>
            <person name="Wesolowski-Louvel M."/>
            <person name="Westhof E."/>
            <person name="Wirth B."/>
            <person name="Zeniou-Meyer M."/>
            <person name="Zivanovic Y."/>
            <person name="Bolotin-Fukuhara M."/>
            <person name="Thierry A."/>
            <person name="Bouchier C."/>
            <person name="Caudron B."/>
            <person name="Scarpelli C."/>
            <person name="Gaillardin C."/>
            <person name="Weissenbach J."/>
            <person name="Wincker P."/>
            <person name="Souciet J.-L."/>
        </authorList>
    </citation>
    <scope>NUCLEOTIDE SEQUENCE [LARGE SCALE GENOMIC DNA]</scope>
    <source>
        <strain>ATCC 8585 / CBS 2359 / DSM 70799 / NBRC 1267 / NRRL Y-1140 / WM37</strain>
    </source>
</reference>
<comment type="function">
    <text evidence="1">Involved in spore wall assembly.</text>
</comment>
<comment type="subcellular location">
    <subcellularLocation>
        <location evidence="1">Membrane</location>
        <topology evidence="1">Multi-pass membrane protein</topology>
    </subcellularLocation>
</comment>
<comment type="similarity">
    <text evidence="3">Belongs to the OSW5 family.</text>
</comment>
<keyword id="KW-0472">Membrane</keyword>
<keyword id="KW-1185">Reference proteome</keyword>
<keyword id="KW-0749">Sporulation</keyword>
<keyword id="KW-0812">Transmembrane</keyword>
<keyword id="KW-1133">Transmembrane helix</keyword>